<reference key="1">
    <citation type="journal article" date="2009" name="PLoS ONE">
        <title>Salmonella paratyphi C: genetic divergence from Salmonella choleraesuis and pathogenic convergence with Salmonella typhi.</title>
        <authorList>
            <person name="Liu W.-Q."/>
            <person name="Feng Y."/>
            <person name="Wang Y."/>
            <person name="Zou Q.-H."/>
            <person name="Chen F."/>
            <person name="Guo J.-T."/>
            <person name="Peng Y.-H."/>
            <person name="Jin Y."/>
            <person name="Li Y.-G."/>
            <person name="Hu S.-N."/>
            <person name="Johnston R.N."/>
            <person name="Liu G.-R."/>
            <person name="Liu S.-L."/>
        </authorList>
    </citation>
    <scope>NUCLEOTIDE SEQUENCE [LARGE SCALE GENOMIC DNA]</scope>
    <source>
        <strain>RKS4594</strain>
    </source>
</reference>
<comment type="catalytic activity">
    <reaction evidence="1">
        <text>(S)-2,3,4,5-tetrahydrodipicolinate + succinyl-CoA + H2O = (S)-2-succinylamino-6-oxoheptanedioate + CoA</text>
        <dbReference type="Rhea" id="RHEA:17325"/>
        <dbReference type="ChEBI" id="CHEBI:15377"/>
        <dbReference type="ChEBI" id="CHEBI:15685"/>
        <dbReference type="ChEBI" id="CHEBI:16845"/>
        <dbReference type="ChEBI" id="CHEBI:57287"/>
        <dbReference type="ChEBI" id="CHEBI:57292"/>
        <dbReference type="EC" id="2.3.1.117"/>
    </reaction>
</comment>
<comment type="pathway">
    <text evidence="1">Amino-acid biosynthesis; L-lysine biosynthesis via DAP pathway; LL-2,6-diaminopimelate from (S)-tetrahydrodipicolinate (succinylase route): step 1/3.</text>
</comment>
<comment type="subunit">
    <text evidence="1">Homotrimer.</text>
</comment>
<comment type="subcellular location">
    <subcellularLocation>
        <location evidence="1">Cytoplasm</location>
    </subcellularLocation>
</comment>
<comment type="similarity">
    <text evidence="1">Belongs to the transferase hexapeptide repeat family.</text>
</comment>
<dbReference type="EC" id="2.3.1.117" evidence="1"/>
<dbReference type="EMBL" id="CP000857">
    <property type="protein sequence ID" value="ACN44418.1"/>
    <property type="molecule type" value="Genomic_DNA"/>
</dbReference>
<dbReference type="RefSeq" id="WP_001186670.1">
    <property type="nucleotide sequence ID" value="NC_012125.1"/>
</dbReference>
<dbReference type="SMR" id="C0Q5S6"/>
<dbReference type="KEGG" id="sei:SPC_0229"/>
<dbReference type="HOGENOM" id="CLU_050859_0_1_6"/>
<dbReference type="UniPathway" id="UPA00034">
    <property type="reaction ID" value="UER00019"/>
</dbReference>
<dbReference type="Proteomes" id="UP000001599">
    <property type="component" value="Chromosome"/>
</dbReference>
<dbReference type="GO" id="GO:0005737">
    <property type="term" value="C:cytoplasm"/>
    <property type="evidence" value="ECO:0007669"/>
    <property type="project" value="UniProtKB-SubCell"/>
</dbReference>
<dbReference type="GO" id="GO:0008666">
    <property type="term" value="F:2,3,4,5-tetrahydropyridine-2,6-dicarboxylate N-succinyltransferase activity"/>
    <property type="evidence" value="ECO:0007669"/>
    <property type="project" value="UniProtKB-UniRule"/>
</dbReference>
<dbReference type="GO" id="GO:0016779">
    <property type="term" value="F:nucleotidyltransferase activity"/>
    <property type="evidence" value="ECO:0007669"/>
    <property type="project" value="TreeGrafter"/>
</dbReference>
<dbReference type="GO" id="GO:0019877">
    <property type="term" value="P:diaminopimelate biosynthetic process"/>
    <property type="evidence" value="ECO:0007669"/>
    <property type="project" value="UniProtKB-UniRule"/>
</dbReference>
<dbReference type="GO" id="GO:0009089">
    <property type="term" value="P:lysine biosynthetic process via diaminopimelate"/>
    <property type="evidence" value="ECO:0007669"/>
    <property type="project" value="UniProtKB-UniRule"/>
</dbReference>
<dbReference type="CDD" id="cd03350">
    <property type="entry name" value="LbH_THP_succinylT"/>
    <property type="match status" value="1"/>
</dbReference>
<dbReference type="FunFam" id="2.160.10.10:FF:000004">
    <property type="entry name" value="2,3,4,5-tetrahydropyridine-2,6-dicarboxylate N-succinyltransferase"/>
    <property type="match status" value="1"/>
</dbReference>
<dbReference type="Gene3D" id="2.160.10.10">
    <property type="entry name" value="Hexapeptide repeat proteins"/>
    <property type="match status" value="1"/>
</dbReference>
<dbReference type="Gene3D" id="1.10.166.10">
    <property type="entry name" value="Tetrahydrodipicolinate-N-succinyltransferase, N-terminal domain"/>
    <property type="match status" value="1"/>
</dbReference>
<dbReference type="HAMAP" id="MF_00811">
    <property type="entry name" value="DapD"/>
    <property type="match status" value="1"/>
</dbReference>
<dbReference type="InterPro" id="IPR005664">
    <property type="entry name" value="DapD_Trfase_Hexpep_rpt_fam"/>
</dbReference>
<dbReference type="InterPro" id="IPR001451">
    <property type="entry name" value="Hexapep"/>
</dbReference>
<dbReference type="InterPro" id="IPR018357">
    <property type="entry name" value="Hexapep_transf_CS"/>
</dbReference>
<dbReference type="InterPro" id="IPR023180">
    <property type="entry name" value="THP_succinylTrfase_dom1"/>
</dbReference>
<dbReference type="InterPro" id="IPR037133">
    <property type="entry name" value="THP_succinylTrfase_N_sf"/>
</dbReference>
<dbReference type="InterPro" id="IPR011004">
    <property type="entry name" value="Trimer_LpxA-like_sf"/>
</dbReference>
<dbReference type="NCBIfam" id="TIGR00965">
    <property type="entry name" value="dapD"/>
    <property type="match status" value="1"/>
</dbReference>
<dbReference type="NCBIfam" id="NF008808">
    <property type="entry name" value="PRK11830.1"/>
    <property type="match status" value="1"/>
</dbReference>
<dbReference type="PANTHER" id="PTHR19136:SF52">
    <property type="entry name" value="2,3,4,5-TETRAHYDROPYRIDINE-2,6-DICARBOXYLATE N-SUCCINYLTRANSFERASE"/>
    <property type="match status" value="1"/>
</dbReference>
<dbReference type="PANTHER" id="PTHR19136">
    <property type="entry name" value="MOLYBDENUM COFACTOR GUANYLYLTRANSFERASE"/>
    <property type="match status" value="1"/>
</dbReference>
<dbReference type="Pfam" id="PF14602">
    <property type="entry name" value="Hexapep_2"/>
    <property type="match status" value="1"/>
</dbReference>
<dbReference type="Pfam" id="PF14805">
    <property type="entry name" value="THDPS_N_2"/>
    <property type="match status" value="1"/>
</dbReference>
<dbReference type="SUPFAM" id="SSF51161">
    <property type="entry name" value="Trimeric LpxA-like enzymes"/>
    <property type="match status" value="1"/>
</dbReference>
<dbReference type="PROSITE" id="PS00101">
    <property type="entry name" value="HEXAPEP_TRANSFERASES"/>
    <property type="match status" value="1"/>
</dbReference>
<gene>
    <name evidence="1" type="primary">dapD</name>
    <name type="ordered locus">SPC_0229</name>
</gene>
<protein>
    <recommendedName>
        <fullName evidence="1">2,3,4,5-tetrahydropyridine-2,6-dicarboxylate N-succinyltransferase</fullName>
        <ecNumber evidence="1">2.3.1.117</ecNumber>
    </recommendedName>
    <alternativeName>
        <fullName evidence="1">Tetrahydrodipicolinate N-succinyltransferase</fullName>
        <shortName evidence="1">THDP succinyltransferase</shortName>
        <shortName evidence="1">THP succinyltransferase</shortName>
        <shortName evidence="1">Tetrahydropicolinate succinylase</shortName>
    </alternativeName>
</protein>
<name>DAPD_SALPC</name>
<proteinExistence type="inferred from homology"/>
<evidence type="ECO:0000255" key="1">
    <source>
        <dbReference type="HAMAP-Rule" id="MF_00811"/>
    </source>
</evidence>
<keyword id="KW-0012">Acyltransferase</keyword>
<keyword id="KW-0028">Amino-acid biosynthesis</keyword>
<keyword id="KW-0963">Cytoplasm</keyword>
<keyword id="KW-0220">Diaminopimelate biosynthesis</keyword>
<keyword id="KW-0457">Lysine biosynthesis</keyword>
<keyword id="KW-0677">Repeat</keyword>
<keyword id="KW-0808">Transferase</keyword>
<accession>C0Q5S6</accession>
<sequence length="274" mass="29866">MQQLQNVIETAFERRADITPANVDTVTREAVKQVISLLDSGALRVAEKIDGQWVTHQWLKKAVLLSFRINDNQVIDGAESRYFDKVPMKFADYDEARFQKEGFRVVPPAAVRQGAFIARNTVLMPSYVNIGAYVDEGTMVDTWATVGSCAQIGKNVHLSGGVGIGGVLEPLQANPTIIEDNCFIGARSEVVEGVIVEEGSVISMGVYLGQSTKIYDRETGEVHYGRVPAGSVVVSGNLPSKDGKYSLYCAVIVKKVDAKTRGKVGINELLRTID</sequence>
<organism>
    <name type="scientific">Salmonella paratyphi C (strain RKS4594)</name>
    <dbReference type="NCBI Taxonomy" id="476213"/>
    <lineage>
        <taxon>Bacteria</taxon>
        <taxon>Pseudomonadati</taxon>
        <taxon>Pseudomonadota</taxon>
        <taxon>Gammaproteobacteria</taxon>
        <taxon>Enterobacterales</taxon>
        <taxon>Enterobacteriaceae</taxon>
        <taxon>Salmonella</taxon>
    </lineage>
</organism>
<feature type="chain" id="PRO_1000148588" description="2,3,4,5-tetrahydropyridine-2,6-dicarboxylate N-succinyltransferase">
    <location>
        <begin position="1"/>
        <end position="274"/>
    </location>
</feature>
<feature type="binding site" evidence="1">
    <location>
        <position position="104"/>
    </location>
    <ligand>
        <name>substrate</name>
    </ligand>
</feature>
<feature type="binding site" evidence="1">
    <location>
        <position position="141"/>
    </location>
    <ligand>
        <name>substrate</name>
    </ligand>
</feature>